<dbReference type="EMBL" id="CT971583">
    <property type="protein sequence ID" value="CAK24277.1"/>
    <property type="molecule type" value="Genomic_DNA"/>
</dbReference>
<dbReference type="SMR" id="A5GMW2"/>
<dbReference type="STRING" id="32051.SynWH7803_1851"/>
<dbReference type="KEGG" id="syx:SynWH7803_1851"/>
<dbReference type="eggNOG" id="COG3258">
    <property type="taxonomic scope" value="Bacteria"/>
</dbReference>
<dbReference type="HOGENOM" id="CLU_033498_0_0_3"/>
<dbReference type="OrthoDB" id="581091at2"/>
<dbReference type="Proteomes" id="UP000001566">
    <property type="component" value="Chromosome"/>
</dbReference>
<dbReference type="GO" id="GO:0031676">
    <property type="term" value="C:plasma membrane-derived thylakoid membrane"/>
    <property type="evidence" value="ECO:0007669"/>
    <property type="project" value="UniProtKB-SubCell"/>
</dbReference>
<dbReference type="GO" id="GO:0009055">
    <property type="term" value="F:electron transfer activity"/>
    <property type="evidence" value="ECO:0007669"/>
    <property type="project" value="UniProtKB-UniRule"/>
</dbReference>
<dbReference type="GO" id="GO:0020037">
    <property type="term" value="F:heme binding"/>
    <property type="evidence" value="ECO:0007669"/>
    <property type="project" value="InterPro"/>
</dbReference>
<dbReference type="GO" id="GO:0005506">
    <property type="term" value="F:iron ion binding"/>
    <property type="evidence" value="ECO:0007669"/>
    <property type="project" value="InterPro"/>
</dbReference>
<dbReference type="GO" id="GO:0015979">
    <property type="term" value="P:photosynthesis"/>
    <property type="evidence" value="ECO:0007669"/>
    <property type="project" value="UniProtKB-UniRule"/>
</dbReference>
<dbReference type="FunFam" id="2.60.40.830:FF:000001">
    <property type="entry name" value="Cytochrome f"/>
    <property type="match status" value="1"/>
</dbReference>
<dbReference type="Gene3D" id="2.40.50.100">
    <property type="match status" value="1"/>
</dbReference>
<dbReference type="Gene3D" id="2.60.40.830">
    <property type="entry name" value="Cytochrome f large domain"/>
    <property type="match status" value="1"/>
</dbReference>
<dbReference type="Gene3D" id="1.20.5.700">
    <property type="entry name" value="Single helix bin"/>
    <property type="match status" value="1"/>
</dbReference>
<dbReference type="HAMAP" id="MF_00610">
    <property type="entry name" value="Cytb6_f_cytF"/>
    <property type="match status" value="1"/>
</dbReference>
<dbReference type="InterPro" id="IPR024058">
    <property type="entry name" value="Cyt-f_TM"/>
</dbReference>
<dbReference type="InterPro" id="IPR002325">
    <property type="entry name" value="Cyt_f"/>
</dbReference>
<dbReference type="InterPro" id="IPR024094">
    <property type="entry name" value="Cyt_f_lg_dom"/>
</dbReference>
<dbReference type="InterPro" id="IPR036826">
    <property type="entry name" value="Cyt_f_lg_dom_sf"/>
</dbReference>
<dbReference type="InterPro" id="IPR011054">
    <property type="entry name" value="Rudment_hybrid_motif"/>
</dbReference>
<dbReference type="NCBIfam" id="NF002736">
    <property type="entry name" value="PRK02693.1"/>
    <property type="match status" value="1"/>
</dbReference>
<dbReference type="PANTHER" id="PTHR33288">
    <property type="match status" value="1"/>
</dbReference>
<dbReference type="PANTHER" id="PTHR33288:SF10">
    <property type="entry name" value="CYTOCHROME F"/>
    <property type="match status" value="1"/>
</dbReference>
<dbReference type="Pfam" id="PF01333">
    <property type="entry name" value="Apocytochr_F_C"/>
    <property type="match status" value="1"/>
</dbReference>
<dbReference type="Pfam" id="PF16639">
    <property type="entry name" value="Apocytochr_F_N"/>
    <property type="match status" value="1"/>
</dbReference>
<dbReference type="PRINTS" id="PR00610">
    <property type="entry name" value="CYTOCHROMEF"/>
</dbReference>
<dbReference type="SUPFAM" id="SSF103431">
    <property type="entry name" value="Cytochrome f subunit of the cytochrome b6f complex, transmembrane anchor"/>
    <property type="match status" value="1"/>
</dbReference>
<dbReference type="SUPFAM" id="SSF49441">
    <property type="entry name" value="Cytochrome f, large domain"/>
    <property type="match status" value="1"/>
</dbReference>
<dbReference type="SUPFAM" id="SSF51246">
    <property type="entry name" value="Rudiment single hybrid motif"/>
    <property type="match status" value="1"/>
</dbReference>
<dbReference type="PROSITE" id="PS51010">
    <property type="entry name" value="CYTF"/>
    <property type="match status" value="1"/>
</dbReference>
<evidence type="ECO:0000255" key="1">
    <source>
        <dbReference type="HAMAP-Rule" id="MF_00610"/>
    </source>
</evidence>
<protein>
    <recommendedName>
        <fullName evidence="1">Cytochrome f</fullName>
    </recommendedName>
</protein>
<reference key="1">
    <citation type="submission" date="2006-05" db="EMBL/GenBank/DDBJ databases">
        <authorList>
            <consortium name="Genoscope"/>
        </authorList>
    </citation>
    <scope>NUCLEOTIDE SEQUENCE [LARGE SCALE GENOMIC DNA]</scope>
    <source>
        <strain>WH7803</strain>
    </source>
</reference>
<sequence>MRRLLSPLFAALIVGVTVLTAPSTSWAYPFWAQQNYDSPREATGKIVCANCHLAQKLTQAEVPQSVLPDSVFKAVVKIPYDTSVPEIGADGSEVPLQVGAVVMLPDGFTLAPQDRWTDDIKEETEGVYFSEYSDDQPNVILVGPIPGDQHQEIVFPVLSPDPATDSNIHFGKYSIHVGGNRGRGQVYPTGEKSNNTVFTAPSTGTVRSIEAGENGASVVTIASADGTELSETVPVGPALIVSVGDAVEAGAPITNDPNVGGFGQLDTEVVLQNPVRIYGLLAFFAAVALAQIMLVLKKKQFEKVQAAEGV</sequence>
<accession>A5GMW2</accession>
<feature type="signal peptide" evidence="1">
    <location>
        <begin position="1"/>
        <end position="27"/>
    </location>
</feature>
<feature type="chain" id="PRO_0000342042" description="Cytochrome f">
    <location>
        <begin position="28"/>
        <end position="310"/>
    </location>
</feature>
<feature type="transmembrane region" description="Helical" evidence="1">
    <location>
        <begin position="277"/>
        <end position="297"/>
    </location>
</feature>
<feature type="binding site" description="axial binding residue" evidence="1">
    <location>
        <position position="28"/>
    </location>
    <ligand>
        <name>heme</name>
        <dbReference type="ChEBI" id="CHEBI:30413"/>
    </ligand>
    <ligandPart>
        <name>Fe</name>
        <dbReference type="ChEBI" id="CHEBI:18248"/>
    </ligandPart>
</feature>
<feature type="binding site" description="covalent" evidence="1">
    <location>
        <position position="48"/>
    </location>
    <ligand>
        <name>heme</name>
        <dbReference type="ChEBI" id="CHEBI:30413"/>
    </ligand>
</feature>
<feature type="binding site" description="covalent" evidence="1">
    <location>
        <position position="51"/>
    </location>
    <ligand>
        <name>heme</name>
        <dbReference type="ChEBI" id="CHEBI:30413"/>
    </ligand>
</feature>
<feature type="binding site" description="axial binding residue" evidence="1">
    <location>
        <position position="52"/>
    </location>
    <ligand>
        <name>heme</name>
        <dbReference type="ChEBI" id="CHEBI:30413"/>
    </ligand>
    <ligandPart>
        <name>Fe</name>
        <dbReference type="ChEBI" id="CHEBI:18248"/>
    </ligandPart>
</feature>
<proteinExistence type="inferred from homology"/>
<name>CYF_SYNPW</name>
<comment type="function">
    <text evidence="1">Component of the cytochrome b6-f complex, which mediates electron transfer between photosystem II (PSII) and photosystem I (PSI), cyclic electron flow around PSI, and state transitions.</text>
</comment>
<comment type="cofactor">
    <cofactor evidence="1">
        <name>heme</name>
        <dbReference type="ChEBI" id="CHEBI:30413"/>
    </cofactor>
    <text evidence="1">Binds 1 heme group covalently.</text>
</comment>
<comment type="subunit">
    <text evidence="1">The 4 large subunits of the cytochrome b6-f complex are cytochrome b6, subunit IV (17 kDa polypeptide, PetD), cytochrome f and the Rieske protein, while the 4 small subunits are PetG, PetL, PetM and PetN. The complex functions as a dimer.</text>
</comment>
<comment type="subcellular location">
    <subcellularLocation>
        <location evidence="1">Cellular thylakoid membrane</location>
        <topology evidence="1">Single-pass membrane protein</topology>
    </subcellularLocation>
</comment>
<comment type="similarity">
    <text evidence="1">Belongs to the cytochrome f family.</text>
</comment>
<organism>
    <name type="scientific">Synechococcus sp. (strain WH7803)</name>
    <dbReference type="NCBI Taxonomy" id="32051"/>
    <lineage>
        <taxon>Bacteria</taxon>
        <taxon>Bacillati</taxon>
        <taxon>Cyanobacteriota</taxon>
        <taxon>Cyanophyceae</taxon>
        <taxon>Synechococcales</taxon>
        <taxon>Synechococcaceae</taxon>
        <taxon>Synechococcus</taxon>
    </lineage>
</organism>
<gene>
    <name evidence="1" type="primary">petA</name>
    <name type="ordered locus">SynWH7803_1851</name>
</gene>
<keyword id="KW-0249">Electron transport</keyword>
<keyword id="KW-0349">Heme</keyword>
<keyword id="KW-0408">Iron</keyword>
<keyword id="KW-0472">Membrane</keyword>
<keyword id="KW-0479">Metal-binding</keyword>
<keyword id="KW-0602">Photosynthesis</keyword>
<keyword id="KW-1185">Reference proteome</keyword>
<keyword id="KW-0732">Signal</keyword>
<keyword id="KW-0793">Thylakoid</keyword>
<keyword id="KW-0812">Transmembrane</keyword>
<keyword id="KW-1133">Transmembrane helix</keyword>
<keyword id="KW-0813">Transport</keyword>